<dbReference type="EMBL" id="M31610">
    <property type="protein sequence ID" value="AAA36981.1"/>
    <property type="molecule type" value="mRNA"/>
</dbReference>
<dbReference type="PIR" id="A45814">
    <property type="entry name" value="A45814"/>
</dbReference>
<dbReference type="SMR" id="P15697"/>
<dbReference type="GO" id="GO:0005615">
    <property type="term" value="C:extracellular space"/>
    <property type="evidence" value="ECO:0007669"/>
    <property type="project" value="TreeGrafter"/>
</dbReference>
<dbReference type="GO" id="GO:0001849">
    <property type="term" value="F:complement component C1q complex binding"/>
    <property type="evidence" value="ECO:0007669"/>
    <property type="project" value="TreeGrafter"/>
</dbReference>
<dbReference type="GO" id="GO:0046872">
    <property type="term" value="F:metal ion binding"/>
    <property type="evidence" value="ECO:0007669"/>
    <property type="project" value="UniProtKB-KW"/>
</dbReference>
<dbReference type="GO" id="GO:0006953">
    <property type="term" value="P:acute-phase response"/>
    <property type="evidence" value="ECO:0007669"/>
    <property type="project" value="UniProtKB-KW"/>
</dbReference>
<dbReference type="GO" id="GO:0045087">
    <property type="term" value="P:innate immune response"/>
    <property type="evidence" value="ECO:0007669"/>
    <property type="project" value="TreeGrafter"/>
</dbReference>
<dbReference type="CDD" id="cd00152">
    <property type="entry name" value="PTX"/>
    <property type="match status" value="1"/>
</dbReference>
<dbReference type="FunFam" id="2.60.120.200:FF:000070">
    <property type="entry name" value="Serum amyloid P-component"/>
    <property type="match status" value="1"/>
</dbReference>
<dbReference type="Gene3D" id="2.60.120.200">
    <property type="match status" value="1"/>
</dbReference>
<dbReference type="InterPro" id="IPR013320">
    <property type="entry name" value="ConA-like_dom_sf"/>
</dbReference>
<dbReference type="InterPro" id="IPR030476">
    <property type="entry name" value="Pentaxin_CS"/>
</dbReference>
<dbReference type="InterPro" id="IPR001759">
    <property type="entry name" value="Pentraxin-related"/>
</dbReference>
<dbReference type="InterPro" id="IPR051005">
    <property type="entry name" value="Pentraxin_domain"/>
</dbReference>
<dbReference type="PANTHER" id="PTHR45869">
    <property type="entry name" value="C-REACTIVE PROTEIN-RELATED"/>
    <property type="match status" value="1"/>
</dbReference>
<dbReference type="PANTHER" id="PTHR45869:SF5">
    <property type="entry name" value="SERUM AMYLOID P-COMPONENT"/>
    <property type="match status" value="1"/>
</dbReference>
<dbReference type="Pfam" id="PF00354">
    <property type="entry name" value="Pentaxin"/>
    <property type="match status" value="1"/>
</dbReference>
<dbReference type="PRINTS" id="PR00895">
    <property type="entry name" value="PENTAXIN"/>
</dbReference>
<dbReference type="SMART" id="SM00159">
    <property type="entry name" value="PTX"/>
    <property type="match status" value="1"/>
</dbReference>
<dbReference type="SUPFAM" id="SSF49899">
    <property type="entry name" value="Concanavalin A-like lectins/glucanases"/>
    <property type="match status" value="1"/>
</dbReference>
<dbReference type="PROSITE" id="PS00289">
    <property type="entry name" value="PTX_1"/>
    <property type="match status" value="1"/>
</dbReference>
<dbReference type="PROSITE" id="PS51828">
    <property type="entry name" value="PTX_2"/>
    <property type="match status" value="1"/>
</dbReference>
<feature type="signal peptide">
    <location>
        <begin position="1"/>
        <end position="19"/>
    </location>
</feature>
<feature type="chain" id="PRO_0000023537" description="Female protein">
    <location>
        <begin position="20"/>
        <end position="231"/>
    </location>
</feature>
<feature type="domain" description="Pentraxin (PTX)" evidence="3">
    <location>
        <begin position="24"/>
        <end position="223"/>
    </location>
</feature>
<feature type="binding site" evidence="3">
    <location>
        <position position="77"/>
    </location>
    <ligand>
        <name>Ca(2+)</name>
        <dbReference type="ChEBI" id="CHEBI:29108"/>
        <label>1</label>
    </ligand>
</feature>
<feature type="binding site" evidence="3">
    <location>
        <position position="78"/>
    </location>
    <ligand>
        <name>Ca(2+)</name>
        <dbReference type="ChEBI" id="CHEBI:29108"/>
        <label>1</label>
    </ligand>
</feature>
<feature type="binding site" evidence="3">
    <location>
        <position position="155"/>
    </location>
    <ligand>
        <name>Ca(2+)</name>
        <dbReference type="ChEBI" id="CHEBI:29108"/>
        <label>1</label>
    </ligand>
</feature>
<feature type="binding site" evidence="3">
    <location>
        <position position="155"/>
    </location>
    <ligand>
        <name>Ca(2+)</name>
        <dbReference type="ChEBI" id="CHEBI:29108"/>
        <label>2</label>
    </ligand>
</feature>
<feature type="binding site" evidence="3">
    <location>
        <position position="156"/>
    </location>
    <ligand>
        <name>Ca(2+)</name>
        <dbReference type="ChEBI" id="CHEBI:29108"/>
        <label>1</label>
    </ligand>
</feature>
<feature type="binding site" evidence="3">
    <location>
        <position position="157"/>
    </location>
    <ligand>
        <name>Ca(2+)</name>
        <dbReference type="ChEBI" id="CHEBI:29108"/>
        <label>1</label>
    </ligand>
</feature>
<feature type="binding site" evidence="3">
    <location>
        <position position="157"/>
    </location>
    <ligand>
        <name>Ca(2+)</name>
        <dbReference type="ChEBI" id="CHEBI:29108"/>
        <label>2</label>
    </ligand>
</feature>
<feature type="binding site" evidence="3">
    <location>
        <position position="167"/>
    </location>
    <ligand>
        <name>Ca(2+)</name>
        <dbReference type="ChEBI" id="CHEBI:29108"/>
        <label>2</label>
    </ligand>
</feature>
<feature type="glycosylation site" description="N-linked (GlcNAc...) asparagine" evidence="2">
    <location>
        <position position="51"/>
    </location>
</feature>
<feature type="disulfide bond" evidence="3">
    <location>
        <begin position="55"/>
        <end position="114"/>
    </location>
</feature>
<reference key="1">
    <citation type="journal article" date="1989" name="J. Immunol.">
        <title>Armenian hamster female protein (serum amyloid P component). Comparison with the sex-regulated homolog in Syrian hamster.</title>
        <authorList>
            <person name="Dowton S.B."/>
            <person name="Waggoner D.J."/>
        </authorList>
    </citation>
    <scope>NUCLEOTIDE SEQUENCE [MRNA]</scope>
</reference>
<name>FP_NOTMI</name>
<keyword id="KW-0011">Acute phase</keyword>
<keyword id="KW-0106">Calcium</keyword>
<keyword id="KW-1015">Disulfide bond</keyword>
<keyword id="KW-0325">Glycoprotein</keyword>
<keyword id="KW-0479">Metal-binding</keyword>
<keyword id="KW-0964">Secreted</keyword>
<keyword id="KW-0732">Signal</keyword>
<accession>P15697</accession>
<evidence type="ECO:0000250" key="1"/>
<evidence type="ECO:0000255" key="2"/>
<evidence type="ECO:0000255" key="3">
    <source>
        <dbReference type="PROSITE-ProRule" id="PRU01172"/>
    </source>
</evidence>
<evidence type="ECO:0000305" key="4"/>
<sequence>MDKMLLLLGVSILLSEVFAQTDLTGKVFVFPRESESDYVKLIPRLEKPLENFTLCFRTYTDLSRPHSLFSYNTKNKDNELLIYKERMGEYGLYIENLGAIVRGVEEFASPVHFCTSWESSSGIAEFWVNGIPWVKKGLKKGYTVKTQPSIILGQEQDNYGGGFDKSQSFVGEMGDLNMWDSVLTPEEIKSVYEGSWLEANILDWRTLNYEMSGYAVIRPRCVALSSYNKIS</sequence>
<protein>
    <recommendedName>
        <fullName>Female protein</fullName>
        <shortName>FP</shortName>
    </recommendedName>
    <alternativeName>
        <fullName>Serum amyloid P-component</fullName>
    </alternativeName>
</protein>
<proteinExistence type="evidence at transcript level"/>
<comment type="cofactor">
    <cofactor evidence="1">
        <name>Ca(2+)</name>
        <dbReference type="ChEBI" id="CHEBI:29108"/>
    </cofactor>
    <text evidence="1">Binds 2 calcium ions per subunit.</text>
</comment>
<comment type="subunit">
    <text>Homopentamer. Pentraxin (or pentaxin) have a discoid arrangement of 5 non-covalently bound subunits.</text>
</comment>
<comment type="subcellular location">
    <subcellularLocation>
        <location>Secreted</location>
    </subcellularLocation>
</comment>
<comment type="miscellaneous">
    <text>Plasma concentration of FP are altered by sex steroids and by stimuli that elicit an acute phase response.</text>
</comment>
<comment type="similarity">
    <text evidence="4">Belongs to the pentraxin family.</text>
</comment>
<organism>
    <name type="scientific">Nothocricetulus migratorius</name>
    <name type="common">Gray dwarf hamster</name>
    <name type="synonym">Cricetulus migratorius</name>
    <dbReference type="NCBI Taxonomy" id="3122392"/>
    <lineage>
        <taxon>Eukaryota</taxon>
        <taxon>Metazoa</taxon>
        <taxon>Chordata</taxon>
        <taxon>Craniata</taxon>
        <taxon>Vertebrata</taxon>
        <taxon>Euteleostomi</taxon>
        <taxon>Mammalia</taxon>
        <taxon>Eutheria</taxon>
        <taxon>Euarchontoglires</taxon>
        <taxon>Glires</taxon>
        <taxon>Rodentia</taxon>
        <taxon>Myomorpha</taxon>
        <taxon>Muroidea</taxon>
        <taxon>Cricetidae</taxon>
        <taxon>Cricetinae</taxon>
        <taxon>Nothocricetulus</taxon>
    </lineage>
</organism>